<accession>A0RHW7</accession>
<comment type="similarity">
    <text evidence="1">Belongs to the UPF0358 family.</text>
</comment>
<gene>
    <name type="ordered locus">BALH_3577</name>
</gene>
<dbReference type="EMBL" id="CP000485">
    <property type="protein sequence ID" value="ABK86810.1"/>
    <property type="molecule type" value="Genomic_DNA"/>
</dbReference>
<dbReference type="RefSeq" id="WP_000135695.1">
    <property type="nucleotide sequence ID" value="NC_008600.1"/>
</dbReference>
<dbReference type="SMR" id="A0RHW7"/>
<dbReference type="KEGG" id="btl:BALH_3577"/>
<dbReference type="HOGENOM" id="CLU_160493_1_0_9"/>
<dbReference type="Gene3D" id="1.10.287.750">
    <property type="entry name" value="SO2669-like"/>
    <property type="match status" value="1"/>
</dbReference>
<dbReference type="HAMAP" id="MF_01560">
    <property type="entry name" value="UPF0358"/>
    <property type="match status" value="1"/>
</dbReference>
<dbReference type="InterPro" id="IPR009983">
    <property type="entry name" value="UPF0358"/>
</dbReference>
<dbReference type="InterPro" id="IPR036270">
    <property type="entry name" value="UPF0358_sf"/>
</dbReference>
<dbReference type="NCBIfam" id="NF010187">
    <property type="entry name" value="PRK13666.1"/>
    <property type="match status" value="1"/>
</dbReference>
<dbReference type="Pfam" id="PF07408">
    <property type="entry name" value="DUF1507"/>
    <property type="match status" value="1"/>
</dbReference>
<dbReference type="SUPFAM" id="SSF140404">
    <property type="entry name" value="EF2458-like"/>
    <property type="match status" value="1"/>
</dbReference>
<name>Y3577_BACAH</name>
<evidence type="ECO:0000255" key="1">
    <source>
        <dbReference type="HAMAP-Rule" id="MF_01560"/>
    </source>
</evidence>
<organism>
    <name type="scientific">Bacillus thuringiensis (strain Al Hakam)</name>
    <dbReference type="NCBI Taxonomy" id="412694"/>
    <lineage>
        <taxon>Bacteria</taxon>
        <taxon>Bacillati</taxon>
        <taxon>Bacillota</taxon>
        <taxon>Bacilli</taxon>
        <taxon>Bacillales</taxon>
        <taxon>Bacillaceae</taxon>
        <taxon>Bacillus</taxon>
        <taxon>Bacillus cereus group</taxon>
    </lineage>
</organism>
<protein>
    <recommendedName>
        <fullName evidence="1">UPF0358 protein BALH_3577</fullName>
    </recommendedName>
</protein>
<reference key="1">
    <citation type="journal article" date="2007" name="J. Bacteriol.">
        <title>The complete genome sequence of Bacillus thuringiensis Al Hakam.</title>
        <authorList>
            <person name="Challacombe J.F."/>
            <person name="Altherr M.R."/>
            <person name="Xie G."/>
            <person name="Bhotika S.S."/>
            <person name="Brown N."/>
            <person name="Bruce D."/>
            <person name="Campbell C.S."/>
            <person name="Campbell M.L."/>
            <person name="Chen J."/>
            <person name="Chertkov O."/>
            <person name="Cleland C."/>
            <person name="Dimitrijevic M."/>
            <person name="Doggett N.A."/>
            <person name="Fawcett J.J."/>
            <person name="Glavina T."/>
            <person name="Goodwin L.A."/>
            <person name="Green L.D."/>
            <person name="Han C.S."/>
            <person name="Hill K.K."/>
            <person name="Hitchcock P."/>
            <person name="Jackson P.J."/>
            <person name="Keim P."/>
            <person name="Kewalramani A.R."/>
            <person name="Longmire J."/>
            <person name="Lucas S."/>
            <person name="Malfatti S."/>
            <person name="Martinez D."/>
            <person name="McMurry K."/>
            <person name="Meincke L.J."/>
            <person name="Misra M."/>
            <person name="Moseman B.L."/>
            <person name="Mundt M."/>
            <person name="Munk A.C."/>
            <person name="Okinaka R.T."/>
            <person name="Parson-Quintana B."/>
            <person name="Reilly L.P."/>
            <person name="Richardson P."/>
            <person name="Robinson D.L."/>
            <person name="Saunders E."/>
            <person name="Tapia R."/>
            <person name="Tesmer J.G."/>
            <person name="Thayer N."/>
            <person name="Thompson L.S."/>
            <person name="Tice H."/>
            <person name="Ticknor L.O."/>
            <person name="Wills P.L."/>
            <person name="Gilna P."/>
            <person name="Brettin T.S."/>
        </authorList>
    </citation>
    <scope>NUCLEOTIDE SEQUENCE [LARGE SCALE GENOMIC DNA]</scope>
    <source>
        <strain>Al Hakam</strain>
    </source>
</reference>
<proteinExistence type="inferred from homology"/>
<sequence length="95" mass="10740">MASETVSNHQEKALALLQADAEKILRLIKVQMDHLTMPQCPLYEEVLDTQMFGLSREVDFAVRLGLIAEEQGKAMLGELERELSALHEAFTNKQQ</sequence>
<feature type="chain" id="PRO_1000069000" description="UPF0358 protein BALH_3577">
    <location>
        <begin position="1"/>
        <end position="95"/>
    </location>
</feature>